<proteinExistence type="inferred from homology"/>
<accession>Q8Z0F0</accession>
<dbReference type="EMBL" id="BA000019">
    <property type="protein sequence ID" value="BAB77671.1"/>
    <property type="molecule type" value="Genomic_DNA"/>
</dbReference>
<dbReference type="PIR" id="AC1825">
    <property type="entry name" value="AC1825"/>
</dbReference>
<dbReference type="RefSeq" id="WP_010994324.1">
    <property type="nucleotide sequence ID" value="NZ_RSCN01000016.1"/>
</dbReference>
<dbReference type="SMR" id="Q8Z0F0"/>
<dbReference type="STRING" id="103690.gene:10492152"/>
<dbReference type="KEGG" id="ana:all0147"/>
<dbReference type="eggNOG" id="COG0261">
    <property type="taxonomic scope" value="Bacteria"/>
</dbReference>
<dbReference type="OrthoDB" id="9813334at2"/>
<dbReference type="Proteomes" id="UP000002483">
    <property type="component" value="Chromosome"/>
</dbReference>
<dbReference type="GO" id="GO:0005737">
    <property type="term" value="C:cytoplasm"/>
    <property type="evidence" value="ECO:0007669"/>
    <property type="project" value="UniProtKB-ARBA"/>
</dbReference>
<dbReference type="GO" id="GO:1990904">
    <property type="term" value="C:ribonucleoprotein complex"/>
    <property type="evidence" value="ECO:0007669"/>
    <property type="project" value="UniProtKB-KW"/>
</dbReference>
<dbReference type="GO" id="GO:0005840">
    <property type="term" value="C:ribosome"/>
    <property type="evidence" value="ECO:0007669"/>
    <property type="project" value="UniProtKB-KW"/>
</dbReference>
<dbReference type="GO" id="GO:0019843">
    <property type="term" value="F:rRNA binding"/>
    <property type="evidence" value="ECO:0007669"/>
    <property type="project" value="UniProtKB-UniRule"/>
</dbReference>
<dbReference type="GO" id="GO:0003735">
    <property type="term" value="F:structural constituent of ribosome"/>
    <property type="evidence" value="ECO:0007669"/>
    <property type="project" value="InterPro"/>
</dbReference>
<dbReference type="GO" id="GO:0006412">
    <property type="term" value="P:translation"/>
    <property type="evidence" value="ECO:0007669"/>
    <property type="project" value="UniProtKB-UniRule"/>
</dbReference>
<dbReference type="HAMAP" id="MF_01363">
    <property type="entry name" value="Ribosomal_bL21"/>
    <property type="match status" value="1"/>
</dbReference>
<dbReference type="InterPro" id="IPR028909">
    <property type="entry name" value="bL21-like"/>
</dbReference>
<dbReference type="InterPro" id="IPR036164">
    <property type="entry name" value="bL21-like_sf"/>
</dbReference>
<dbReference type="InterPro" id="IPR001787">
    <property type="entry name" value="Ribosomal_bL21"/>
</dbReference>
<dbReference type="InterPro" id="IPR018258">
    <property type="entry name" value="Ribosomal_bL21_CS"/>
</dbReference>
<dbReference type="NCBIfam" id="TIGR00061">
    <property type="entry name" value="L21"/>
    <property type="match status" value="1"/>
</dbReference>
<dbReference type="PANTHER" id="PTHR21349">
    <property type="entry name" value="50S RIBOSOMAL PROTEIN L21"/>
    <property type="match status" value="1"/>
</dbReference>
<dbReference type="PANTHER" id="PTHR21349:SF0">
    <property type="entry name" value="LARGE RIBOSOMAL SUBUNIT PROTEIN BL21M"/>
    <property type="match status" value="1"/>
</dbReference>
<dbReference type="Pfam" id="PF00829">
    <property type="entry name" value="Ribosomal_L21p"/>
    <property type="match status" value="1"/>
</dbReference>
<dbReference type="SUPFAM" id="SSF141091">
    <property type="entry name" value="L21p-like"/>
    <property type="match status" value="1"/>
</dbReference>
<dbReference type="PROSITE" id="PS01169">
    <property type="entry name" value="RIBOSOMAL_L21"/>
    <property type="match status" value="1"/>
</dbReference>
<sequence>MAYAIIETGGKQVRVEPGRFYDIELLSVEPDEKVTIDSVLLVQNDGEVTIGQPLVAGATVQGTVLRHLRGRKVLVYKMKPKKKTRKKRGHRQEITRLLIDSITLNGTVLTAPTATEETADATPDTETAAE</sequence>
<organism>
    <name type="scientific">Nostoc sp. (strain PCC 7120 / SAG 25.82 / UTEX 2576)</name>
    <dbReference type="NCBI Taxonomy" id="103690"/>
    <lineage>
        <taxon>Bacteria</taxon>
        <taxon>Bacillati</taxon>
        <taxon>Cyanobacteriota</taxon>
        <taxon>Cyanophyceae</taxon>
        <taxon>Nostocales</taxon>
        <taxon>Nostocaceae</taxon>
        <taxon>Nostoc</taxon>
    </lineage>
</organism>
<comment type="function">
    <text evidence="1">This protein binds to 23S rRNA in the presence of protein L20.</text>
</comment>
<comment type="subunit">
    <text evidence="1">Part of the 50S ribosomal subunit. Contacts protein L20.</text>
</comment>
<comment type="similarity">
    <text evidence="1">Belongs to the bacterial ribosomal protein bL21 family.</text>
</comment>
<gene>
    <name evidence="1" type="primary">rplU</name>
    <name evidence="1" type="synonym">rpl21</name>
    <name type="ordered locus">all0147</name>
</gene>
<protein>
    <recommendedName>
        <fullName evidence="1">Large ribosomal subunit protein bL21</fullName>
    </recommendedName>
    <alternativeName>
        <fullName evidence="3">50S ribosomal protein L21</fullName>
    </alternativeName>
</protein>
<feature type="chain" id="PRO_0000269271" description="Large ribosomal subunit protein bL21">
    <location>
        <begin position="1"/>
        <end position="130"/>
    </location>
</feature>
<feature type="region of interest" description="Disordered" evidence="2">
    <location>
        <begin position="110"/>
        <end position="130"/>
    </location>
</feature>
<evidence type="ECO:0000255" key="1">
    <source>
        <dbReference type="HAMAP-Rule" id="MF_01363"/>
    </source>
</evidence>
<evidence type="ECO:0000256" key="2">
    <source>
        <dbReference type="SAM" id="MobiDB-lite"/>
    </source>
</evidence>
<evidence type="ECO:0000305" key="3"/>
<reference key="1">
    <citation type="journal article" date="2001" name="DNA Res.">
        <title>Complete genomic sequence of the filamentous nitrogen-fixing cyanobacterium Anabaena sp. strain PCC 7120.</title>
        <authorList>
            <person name="Kaneko T."/>
            <person name="Nakamura Y."/>
            <person name="Wolk C.P."/>
            <person name="Kuritz T."/>
            <person name="Sasamoto S."/>
            <person name="Watanabe A."/>
            <person name="Iriguchi M."/>
            <person name="Ishikawa A."/>
            <person name="Kawashima K."/>
            <person name="Kimura T."/>
            <person name="Kishida Y."/>
            <person name="Kohara M."/>
            <person name="Matsumoto M."/>
            <person name="Matsuno A."/>
            <person name="Muraki A."/>
            <person name="Nakazaki N."/>
            <person name="Shimpo S."/>
            <person name="Sugimoto M."/>
            <person name="Takazawa M."/>
            <person name="Yamada M."/>
            <person name="Yasuda M."/>
            <person name="Tabata S."/>
        </authorList>
    </citation>
    <scope>NUCLEOTIDE SEQUENCE [LARGE SCALE GENOMIC DNA]</scope>
    <source>
        <strain>PCC 7120 / SAG 25.82 / UTEX 2576</strain>
    </source>
</reference>
<keyword id="KW-1185">Reference proteome</keyword>
<keyword id="KW-0687">Ribonucleoprotein</keyword>
<keyword id="KW-0689">Ribosomal protein</keyword>
<keyword id="KW-0694">RNA-binding</keyword>
<keyword id="KW-0699">rRNA-binding</keyword>
<name>RL21_NOSS1</name>